<reference key="1">
    <citation type="journal article" date="2005" name="Genomics">
        <title>Genomic sequence of the class II region of the canine MHC: comparison with the MHC of other mammalian species.</title>
        <authorList>
            <person name="Debenham S.L."/>
            <person name="Hart E.A."/>
            <person name="Ashurst J.L."/>
            <person name="Howe K.L."/>
            <person name="Quail M.A."/>
            <person name="Ollier W.E.R."/>
            <person name="Binns M.M."/>
        </authorList>
    </citation>
    <scope>NUCLEOTIDE SEQUENCE [LARGE SCALE GENOMIC DNA]</scope>
    <source>
        <strain>Doberman pinscher</strain>
    </source>
</reference>
<name>VPS52_CANLF</name>
<comment type="function">
    <text evidence="1">Acts as a component of the GARP complex that is involved in retrograde transport from early and late endosomes to the trans-Golgi network (TGN). The GARP complex is required for the maintenance of the cycling of mannose 6-phosphate receptors between the TGN and endosomes, this cycling is necessary for proper lysosomal sorting of acid hydrolases such as CTSD. Acts as a component of the EARP complex that is involved in endocytic recycling. The EARP complex associates with Rab4-positive endosomes and promotes recycling of internalized transferrin receptor (TFRC) to the plasma membrane.</text>
</comment>
<comment type="subunit">
    <text evidence="1">Component of the Golgi-associated retrograde protein (GARP) complex, also called VFT (VPS fifty-three) complex, composed of VPS51, VPS52, VPS53 and VPS54. Component of the endosome-associated retrograde protein (EARP) complex, composed of VPS51, VPS52, VPS53 and VPS50/Syndetin. EIPR1 interacts with both EARP and GARP complexes and mediates the recruitment of the GARP complex to the trans-Golgi network. Interacts with RAB6A and STX10. Interacts with BLTP3B.</text>
</comment>
<comment type="subcellular location">
    <subcellularLocation>
        <location evidence="1">Golgi apparatus</location>
        <location evidence="1">trans-Golgi network membrane</location>
        <topology evidence="1">Peripheral membrane protein</topology>
    </subcellularLocation>
    <subcellularLocation>
        <location evidence="1">Endosome membrane</location>
        <topology evidence="1">Peripheral membrane protein</topology>
    </subcellularLocation>
    <subcellularLocation>
        <location evidence="1">Recycling endosome</location>
    </subcellularLocation>
    <text evidence="1">Localizes to the trans-Golgi network as part of the GARP complex, while it localizes to recycling endosomes as part of the EARP complex.</text>
</comment>
<comment type="similarity">
    <text evidence="4">Belongs to the VPS52 family.</text>
</comment>
<proteinExistence type="inferred from homology"/>
<evidence type="ECO:0000250" key="1">
    <source>
        <dbReference type="UniProtKB" id="Q8N1B4"/>
    </source>
</evidence>
<evidence type="ECO:0000255" key="2"/>
<evidence type="ECO:0000256" key="3">
    <source>
        <dbReference type="SAM" id="MobiDB-lite"/>
    </source>
</evidence>
<evidence type="ECO:0000305" key="4"/>
<organism>
    <name type="scientific">Canis lupus familiaris</name>
    <name type="common">Dog</name>
    <name type="synonym">Canis familiaris</name>
    <dbReference type="NCBI Taxonomy" id="9615"/>
    <lineage>
        <taxon>Eukaryota</taxon>
        <taxon>Metazoa</taxon>
        <taxon>Chordata</taxon>
        <taxon>Craniata</taxon>
        <taxon>Vertebrata</taxon>
        <taxon>Euteleostomi</taxon>
        <taxon>Mammalia</taxon>
        <taxon>Eutheria</taxon>
        <taxon>Laurasiatheria</taxon>
        <taxon>Carnivora</taxon>
        <taxon>Caniformia</taxon>
        <taxon>Canidae</taxon>
        <taxon>Canis</taxon>
    </lineage>
</organism>
<gene>
    <name type="primary">VPS52</name>
</gene>
<protein>
    <recommendedName>
        <fullName>Vacuolar protein sorting-associated protein 52 homolog</fullName>
    </recommendedName>
</protein>
<sequence length="723" mass="82238">MAAAATMAAAARELLLRAGTSDMEEEEGPLGGGPGLQEPLPLGELDISSDEFILDEVDVHIQANLEDELVKEALKTGVDLRHYSKQVELELQQIEQKSIRDYIQESENIASLHNQITACDAVLERMEQMLGAFQSDLSSISSEIRTLQEQSGAMNIRLRNRQAVRGKLGELVDGLIVPSALIMAILEAPVTEPRFLEQLQELDAKAAAVREQEARGTAACADVRGILDRLRVKAVTKIREFILQKIYSFRKPMTNYQIPQTALLKYRFFYQFLLGNERATAKEIRDEYVETLSKIYLSYYRSYLGRLMKVQYEEVAEKDDLMGVEDTAKKGFFSKPSLRSRNTIFTLGTRGSVISPTELEAPILVPHTAQRGEQRYPFEALFRSQHYALLDNSCREYLFICEFFVVSGSAAHDLFHAVMGRTLGMTLKHLESYLTDCYDAIAVFLCIHIVLRFRNIAAKRDVPALDRYWEQVLALLWPRFELILEMNVQSVRSTDPQRLGGLDTRPHYITRRYAEFSSALVSINQTVPNERTMQLLGQLQVEVENFVLRVAAEFSSRKEQLVFLINNYDMMLGVLMERAADDSKEVESFQQLLNARTQEFIEELLSPPFGGLVAFVKEAEALIERGQAERLRGEEARVTQLIRGFGSSWKSSVESLSQDVMRSFTNFRNGTSIIQGALTQLIQLYHRFHRVLSQPQLRALPARAELINIHHLMVELKKHKPNF</sequence>
<feature type="initiator methionine" description="Removed" evidence="1">
    <location>
        <position position="1"/>
    </location>
</feature>
<feature type="chain" id="PRO_0000213314" description="Vacuolar protein sorting-associated protein 52 homolog">
    <location>
        <begin position="2"/>
        <end position="723"/>
    </location>
</feature>
<feature type="region of interest" description="Disordered" evidence="3">
    <location>
        <begin position="21"/>
        <end position="41"/>
    </location>
</feature>
<feature type="coiled-coil region" evidence="2">
    <location>
        <begin position="107"/>
        <end position="127"/>
    </location>
</feature>
<feature type="coiled-coil region" evidence="2">
    <location>
        <begin position="194"/>
        <end position="215"/>
    </location>
</feature>
<feature type="modified residue" description="N-acetylalanine" evidence="1">
    <location>
        <position position="2"/>
    </location>
</feature>
<feature type="modified residue" description="Phosphoserine" evidence="1">
    <location>
        <position position="355"/>
    </location>
</feature>
<keyword id="KW-0007">Acetylation</keyword>
<keyword id="KW-0175">Coiled coil</keyword>
<keyword id="KW-0967">Endosome</keyword>
<keyword id="KW-0333">Golgi apparatus</keyword>
<keyword id="KW-0472">Membrane</keyword>
<keyword id="KW-0597">Phosphoprotein</keyword>
<keyword id="KW-0653">Protein transport</keyword>
<keyword id="KW-1185">Reference proteome</keyword>
<keyword id="KW-0813">Transport</keyword>
<accession>Q5TJF0</accession>
<dbReference type="EMBL" id="AJ630366">
    <property type="protein sequence ID" value="CAI11438.1"/>
    <property type="molecule type" value="Genomic_DNA"/>
</dbReference>
<dbReference type="RefSeq" id="NP_001041553.1">
    <property type="nucleotide sequence ID" value="NM_001048088.1"/>
</dbReference>
<dbReference type="SMR" id="Q5TJF0"/>
<dbReference type="FunCoup" id="Q5TJF0">
    <property type="interactions" value="2917"/>
</dbReference>
<dbReference type="STRING" id="9615.ENSCAFP00000001355"/>
<dbReference type="PaxDb" id="9612-ENSCAFP00000001355"/>
<dbReference type="Ensembl" id="ENSCAFT00000001471.4">
    <property type="protein sequence ID" value="ENSCAFP00000001355.3"/>
    <property type="gene ID" value="ENSCAFG00000000941.4"/>
</dbReference>
<dbReference type="Ensembl" id="ENSCAFT00030024657.1">
    <property type="protein sequence ID" value="ENSCAFP00030021529.1"/>
    <property type="gene ID" value="ENSCAFG00030013308.1"/>
</dbReference>
<dbReference type="Ensembl" id="ENSCAFT00040038554.1">
    <property type="protein sequence ID" value="ENSCAFP00040033627.1"/>
    <property type="gene ID" value="ENSCAFG00040020822.1"/>
</dbReference>
<dbReference type="Ensembl" id="ENSCAFT00845036564.1">
    <property type="protein sequence ID" value="ENSCAFP00845028611.1"/>
    <property type="gene ID" value="ENSCAFG00845020730.1"/>
</dbReference>
<dbReference type="GeneID" id="474871"/>
<dbReference type="KEGG" id="cfa:474871"/>
<dbReference type="CTD" id="6293"/>
<dbReference type="VEuPathDB" id="HostDB:ENSCAFG00845020730"/>
<dbReference type="VGNC" id="VGNC:48296">
    <property type="gene designation" value="VPS52"/>
</dbReference>
<dbReference type="eggNOG" id="KOG1961">
    <property type="taxonomic scope" value="Eukaryota"/>
</dbReference>
<dbReference type="GeneTree" id="ENSGT00390000008815"/>
<dbReference type="HOGENOM" id="CLU_010797_0_0_1"/>
<dbReference type="InParanoid" id="Q5TJF0"/>
<dbReference type="OMA" id="IHVVMVE"/>
<dbReference type="OrthoDB" id="19482at2759"/>
<dbReference type="TreeFam" id="TF314937"/>
<dbReference type="Reactome" id="R-CFA-6811440">
    <property type="pathway name" value="Retrograde transport at the Trans-Golgi-Network"/>
</dbReference>
<dbReference type="Proteomes" id="UP000002254">
    <property type="component" value="Chromosome 12"/>
</dbReference>
<dbReference type="Proteomes" id="UP000694429">
    <property type="component" value="Chromosome 12"/>
</dbReference>
<dbReference type="Proteomes" id="UP000694542">
    <property type="component" value="Chromosome 12"/>
</dbReference>
<dbReference type="Proteomes" id="UP000805418">
    <property type="component" value="Chromosome 12"/>
</dbReference>
<dbReference type="Bgee" id="ENSCAFG00000000941">
    <property type="expression patterns" value="Expressed in granulocyte and 47 other cell types or tissues"/>
</dbReference>
<dbReference type="GO" id="GO:0005829">
    <property type="term" value="C:cytosol"/>
    <property type="evidence" value="ECO:0007669"/>
    <property type="project" value="GOC"/>
</dbReference>
<dbReference type="GO" id="GO:1990745">
    <property type="term" value="C:EARP complex"/>
    <property type="evidence" value="ECO:0000250"/>
    <property type="project" value="UniProtKB"/>
</dbReference>
<dbReference type="GO" id="GO:0010008">
    <property type="term" value="C:endosome membrane"/>
    <property type="evidence" value="ECO:0007669"/>
    <property type="project" value="UniProtKB-SubCell"/>
</dbReference>
<dbReference type="GO" id="GO:0000938">
    <property type="term" value="C:GARP complex"/>
    <property type="evidence" value="ECO:0000318"/>
    <property type="project" value="GO_Central"/>
</dbReference>
<dbReference type="GO" id="GO:0055037">
    <property type="term" value="C:recycling endosome"/>
    <property type="evidence" value="ECO:0000250"/>
    <property type="project" value="UniProtKB"/>
</dbReference>
<dbReference type="GO" id="GO:0019905">
    <property type="term" value="F:syntaxin binding"/>
    <property type="evidence" value="ECO:0000318"/>
    <property type="project" value="GO_Central"/>
</dbReference>
<dbReference type="GO" id="GO:0032456">
    <property type="term" value="P:endocytic recycling"/>
    <property type="evidence" value="ECO:0000250"/>
    <property type="project" value="UniProtKB"/>
</dbReference>
<dbReference type="GO" id="GO:0006896">
    <property type="term" value="P:Golgi to vacuole transport"/>
    <property type="evidence" value="ECO:0000318"/>
    <property type="project" value="GO_Central"/>
</dbReference>
<dbReference type="GO" id="GO:0007041">
    <property type="term" value="P:lysosomal transport"/>
    <property type="evidence" value="ECO:0000318"/>
    <property type="project" value="GO_Central"/>
</dbReference>
<dbReference type="GO" id="GO:0015031">
    <property type="term" value="P:protein transport"/>
    <property type="evidence" value="ECO:0007669"/>
    <property type="project" value="UniProtKB-KW"/>
</dbReference>
<dbReference type="GO" id="GO:0042147">
    <property type="term" value="P:retrograde transport, endosome to Golgi"/>
    <property type="evidence" value="ECO:0000318"/>
    <property type="project" value="GO_Central"/>
</dbReference>
<dbReference type="InterPro" id="IPR007258">
    <property type="entry name" value="Vps52"/>
</dbReference>
<dbReference type="InterPro" id="IPR048361">
    <property type="entry name" value="Vps52_C"/>
</dbReference>
<dbReference type="InterPro" id="IPR048319">
    <property type="entry name" value="Vps52_CC"/>
</dbReference>
<dbReference type="PANTHER" id="PTHR14190">
    <property type="entry name" value="SUPPRESSOR OF ACTIN MUTATIONS 2/VACUOLAR PROTEIN SORTING 52"/>
    <property type="match status" value="1"/>
</dbReference>
<dbReference type="PANTHER" id="PTHR14190:SF7">
    <property type="entry name" value="VACUOLAR PROTEIN SORTING-ASSOCIATED PROTEIN 52 HOMOLOG"/>
    <property type="match status" value="1"/>
</dbReference>
<dbReference type="Pfam" id="PF20655">
    <property type="entry name" value="Vps52_C"/>
    <property type="match status" value="1"/>
</dbReference>
<dbReference type="Pfam" id="PF04129">
    <property type="entry name" value="Vps52_CC"/>
    <property type="match status" value="1"/>
</dbReference>